<sequence length="199" mass="20718">MSARAPKELRLALPPCLLNRTFASHNASGGSSAGLRSSGAGGGTCITQVGQQLFQSFSSTLVLIVLVTLIFCLLVLSLSTFHIHKRRMKKRKMQRAQEEYERDHCSGSHGGGGLPRAGVQAPTHGKETRLERQPRDSAFCTPSNATSSSSSSSSSPGLLCQGPCAPPPPLPAPTPQGAPAASSCLDTPGEGLLQTVVLS</sequence>
<organism>
    <name type="scientific">Mus musculus</name>
    <name type="common">Mouse</name>
    <dbReference type="NCBI Taxonomy" id="10090"/>
    <lineage>
        <taxon>Eukaryota</taxon>
        <taxon>Metazoa</taxon>
        <taxon>Chordata</taxon>
        <taxon>Craniata</taxon>
        <taxon>Vertebrata</taxon>
        <taxon>Euteleostomi</taxon>
        <taxon>Mammalia</taxon>
        <taxon>Eutheria</taxon>
        <taxon>Euarchontoglires</taxon>
        <taxon>Glires</taxon>
        <taxon>Rodentia</taxon>
        <taxon>Myomorpha</taxon>
        <taxon>Muroidea</taxon>
        <taxon>Muridae</taxon>
        <taxon>Murinae</taxon>
        <taxon>Mus</taxon>
        <taxon>Mus</taxon>
    </lineage>
</organism>
<comment type="subcellular location">
    <subcellularLocation>
        <location evidence="3">Membrane</location>
        <topology evidence="3">Single-pass type I membrane protein</topology>
    </subcellularLocation>
</comment>
<comment type="sequence caution" evidence="3">
    <conflict type="frameshift">
        <sequence resource="EMBL-CDS" id="BAC28535"/>
    </conflict>
</comment>
<reference key="1">
    <citation type="journal article" date="2005" name="Science">
        <title>The transcriptional landscape of the mammalian genome.</title>
        <authorList>
            <person name="Carninci P."/>
            <person name="Kasukawa T."/>
            <person name="Katayama S."/>
            <person name="Gough J."/>
            <person name="Frith M.C."/>
            <person name="Maeda N."/>
            <person name="Oyama R."/>
            <person name="Ravasi T."/>
            <person name="Lenhard B."/>
            <person name="Wells C."/>
            <person name="Kodzius R."/>
            <person name="Shimokawa K."/>
            <person name="Bajic V.B."/>
            <person name="Brenner S.E."/>
            <person name="Batalov S."/>
            <person name="Forrest A.R."/>
            <person name="Zavolan M."/>
            <person name="Davis M.J."/>
            <person name="Wilming L.G."/>
            <person name="Aidinis V."/>
            <person name="Allen J.E."/>
            <person name="Ambesi-Impiombato A."/>
            <person name="Apweiler R."/>
            <person name="Aturaliya R.N."/>
            <person name="Bailey T.L."/>
            <person name="Bansal M."/>
            <person name="Baxter L."/>
            <person name="Beisel K.W."/>
            <person name="Bersano T."/>
            <person name="Bono H."/>
            <person name="Chalk A.M."/>
            <person name="Chiu K.P."/>
            <person name="Choudhary V."/>
            <person name="Christoffels A."/>
            <person name="Clutterbuck D.R."/>
            <person name="Crowe M.L."/>
            <person name="Dalla E."/>
            <person name="Dalrymple B.P."/>
            <person name="de Bono B."/>
            <person name="Della Gatta G."/>
            <person name="di Bernardo D."/>
            <person name="Down T."/>
            <person name="Engstrom P."/>
            <person name="Fagiolini M."/>
            <person name="Faulkner G."/>
            <person name="Fletcher C.F."/>
            <person name="Fukushima T."/>
            <person name="Furuno M."/>
            <person name="Futaki S."/>
            <person name="Gariboldi M."/>
            <person name="Georgii-Hemming P."/>
            <person name="Gingeras T.R."/>
            <person name="Gojobori T."/>
            <person name="Green R.E."/>
            <person name="Gustincich S."/>
            <person name="Harbers M."/>
            <person name="Hayashi Y."/>
            <person name="Hensch T.K."/>
            <person name="Hirokawa N."/>
            <person name="Hill D."/>
            <person name="Huminiecki L."/>
            <person name="Iacono M."/>
            <person name="Ikeo K."/>
            <person name="Iwama A."/>
            <person name="Ishikawa T."/>
            <person name="Jakt M."/>
            <person name="Kanapin A."/>
            <person name="Katoh M."/>
            <person name="Kawasawa Y."/>
            <person name="Kelso J."/>
            <person name="Kitamura H."/>
            <person name="Kitano H."/>
            <person name="Kollias G."/>
            <person name="Krishnan S.P."/>
            <person name="Kruger A."/>
            <person name="Kummerfeld S.K."/>
            <person name="Kurochkin I.V."/>
            <person name="Lareau L.F."/>
            <person name="Lazarevic D."/>
            <person name="Lipovich L."/>
            <person name="Liu J."/>
            <person name="Liuni S."/>
            <person name="McWilliam S."/>
            <person name="Madan Babu M."/>
            <person name="Madera M."/>
            <person name="Marchionni L."/>
            <person name="Matsuda H."/>
            <person name="Matsuzawa S."/>
            <person name="Miki H."/>
            <person name="Mignone F."/>
            <person name="Miyake S."/>
            <person name="Morris K."/>
            <person name="Mottagui-Tabar S."/>
            <person name="Mulder N."/>
            <person name="Nakano N."/>
            <person name="Nakauchi H."/>
            <person name="Ng P."/>
            <person name="Nilsson R."/>
            <person name="Nishiguchi S."/>
            <person name="Nishikawa S."/>
            <person name="Nori F."/>
            <person name="Ohara O."/>
            <person name="Okazaki Y."/>
            <person name="Orlando V."/>
            <person name="Pang K.C."/>
            <person name="Pavan W.J."/>
            <person name="Pavesi G."/>
            <person name="Pesole G."/>
            <person name="Petrovsky N."/>
            <person name="Piazza S."/>
            <person name="Reed J."/>
            <person name="Reid J.F."/>
            <person name="Ring B.Z."/>
            <person name="Ringwald M."/>
            <person name="Rost B."/>
            <person name="Ruan Y."/>
            <person name="Salzberg S.L."/>
            <person name="Sandelin A."/>
            <person name="Schneider C."/>
            <person name="Schoenbach C."/>
            <person name="Sekiguchi K."/>
            <person name="Semple C.A."/>
            <person name="Seno S."/>
            <person name="Sessa L."/>
            <person name="Sheng Y."/>
            <person name="Shibata Y."/>
            <person name="Shimada H."/>
            <person name="Shimada K."/>
            <person name="Silva D."/>
            <person name="Sinclair B."/>
            <person name="Sperling S."/>
            <person name="Stupka E."/>
            <person name="Sugiura K."/>
            <person name="Sultana R."/>
            <person name="Takenaka Y."/>
            <person name="Taki K."/>
            <person name="Tammoja K."/>
            <person name="Tan S.L."/>
            <person name="Tang S."/>
            <person name="Taylor M.S."/>
            <person name="Tegner J."/>
            <person name="Teichmann S.A."/>
            <person name="Ueda H.R."/>
            <person name="van Nimwegen E."/>
            <person name="Verardo R."/>
            <person name="Wei C.L."/>
            <person name="Yagi K."/>
            <person name="Yamanishi H."/>
            <person name="Zabarovsky E."/>
            <person name="Zhu S."/>
            <person name="Zimmer A."/>
            <person name="Hide W."/>
            <person name="Bult C."/>
            <person name="Grimmond S.M."/>
            <person name="Teasdale R.D."/>
            <person name="Liu E.T."/>
            <person name="Brusic V."/>
            <person name="Quackenbush J."/>
            <person name="Wahlestedt C."/>
            <person name="Mattick J.S."/>
            <person name="Hume D.A."/>
            <person name="Kai C."/>
            <person name="Sasaki D."/>
            <person name="Tomaru Y."/>
            <person name="Fukuda S."/>
            <person name="Kanamori-Katayama M."/>
            <person name="Suzuki M."/>
            <person name="Aoki J."/>
            <person name="Arakawa T."/>
            <person name="Iida J."/>
            <person name="Imamura K."/>
            <person name="Itoh M."/>
            <person name="Kato T."/>
            <person name="Kawaji H."/>
            <person name="Kawagashira N."/>
            <person name="Kawashima T."/>
            <person name="Kojima M."/>
            <person name="Kondo S."/>
            <person name="Konno H."/>
            <person name="Nakano K."/>
            <person name="Ninomiya N."/>
            <person name="Nishio T."/>
            <person name="Okada M."/>
            <person name="Plessy C."/>
            <person name="Shibata K."/>
            <person name="Shiraki T."/>
            <person name="Suzuki S."/>
            <person name="Tagami M."/>
            <person name="Waki K."/>
            <person name="Watahiki A."/>
            <person name="Okamura-Oho Y."/>
            <person name="Suzuki H."/>
            <person name="Kawai J."/>
            <person name="Hayashizaki Y."/>
        </authorList>
    </citation>
    <scope>NUCLEOTIDE SEQUENCE [LARGE SCALE MRNA]</scope>
    <source>
        <strain>C57BL/6J</strain>
        <tissue>Diencephalon</tissue>
    </source>
</reference>
<reference key="2">
    <citation type="journal article" date="2004" name="Genome Res.">
        <title>The status, quality, and expansion of the NIH full-length cDNA project: the Mammalian Gene Collection (MGC).</title>
        <authorList>
            <consortium name="The MGC Project Team"/>
        </authorList>
    </citation>
    <scope>NUCLEOTIDE SEQUENCE [LARGE SCALE MRNA]</scope>
</reference>
<proteinExistence type="evidence at transcript level"/>
<evidence type="ECO:0000255" key="1"/>
<evidence type="ECO:0000256" key="2">
    <source>
        <dbReference type="SAM" id="MobiDB-lite"/>
    </source>
</evidence>
<evidence type="ECO:0000305" key="3"/>
<keyword id="KW-0325">Glycoprotein</keyword>
<keyword id="KW-0472">Membrane</keyword>
<keyword id="KW-1185">Reference proteome</keyword>
<keyword id="KW-0732">Signal</keyword>
<keyword id="KW-0812">Transmembrane</keyword>
<keyword id="KW-1133">Transmembrane helix</keyword>
<protein>
    <recommendedName>
        <fullName>Uncharacterized protein C11orf87 homolog</fullName>
    </recommendedName>
</protein>
<dbReference type="EMBL" id="AK033979">
    <property type="protein sequence ID" value="BAC28535.1"/>
    <property type="status" value="ALT_FRAME"/>
    <property type="molecule type" value="mRNA"/>
</dbReference>
<dbReference type="EMBL" id="BC109328">
    <property type="protein sequence ID" value="AAI09329.1"/>
    <property type="molecule type" value="mRNA"/>
</dbReference>
<dbReference type="CCDS" id="CCDS52795.1"/>
<dbReference type="RefSeq" id="NP_001273570.1">
    <property type="nucleotide sequence ID" value="NM_001286641.1"/>
</dbReference>
<dbReference type="RefSeq" id="NP_849237.2">
    <property type="nucleotide sequence ID" value="NM_178906.5"/>
</dbReference>
<dbReference type="RefSeq" id="XP_006510521.1">
    <property type="nucleotide sequence ID" value="XM_006510458.4"/>
</dbReference>
<dbReference type="RefSeq" id="XP_011240867.1">
    <property type="nucleotide sequence ID" value="XM_011242565.4"/>
</dbReference>
<dbReference type="RefSeq" id="XP_030100289.1">
    <property type="nucleotide sequence ID" value="XM_030244429.2"/>
</dbReference>
<dbReference type="SMR" id="Q32M26"/>
<dbReference type="FunCoup" id="Q32M26">
    <property type="interactions" value="22"/>
</dbReference>
<dbReference type="STRING" id="10090.ENSMUSP00000149532"/>
<dbReference type="GlyConnect" id="2812">
    <property type="glycosylation" value="2 N-Linked glycans (2 sites)"/>
</dbReference>
<dbReference type="GlyGen" id="Q32M26">
    <property type="glycosylation" value="3 sites, 4 N-linked glycans (2 sites)"/>
</dbReference>
<dbReference type="iPTMnet" id="Q32M26"/>
<dbReference type="PhosphoSitePlus" id="Q32M26"/>
<dbReference type="PaxDb" id="10090-ENSMUSP00000096365"/>
<dbReference type="PeptideAtlas" id="Q32M26"/>
<dbReference type="Antibodypedia" id="32002">
    <property type="antibodies" value="24 antibodies from 13 providers"/>
</dbReference>
<dbReference type="DNASU" id="330941"/>
<dbReference type="Ensembl" id="ENSMUST00000098768.3">
    <property type="protein sequence ID" value="ENSMUSP00000096365.3"/>
    <property type="gene ID" value="ENSMUSG00000078307.4"/>
</dbReference>
<dbReference type="Ensembl" id="ENSMUST00000213937.2">
    <property type="protein sequence ID" value="ENSMUSP00000149532.2"/>
    <property type="gene ID" value="ENSMUSG00000078307.4"/>
</dbReference>
<dbReference type="GeneID" id="330941"/>
<dbReference type="KEGG" id="mmu:330941"/>
<dbReference type="UCSC" id="uc009plx.3">
    <property type="organism name" value="mouse"/>
</dbReference>
<dbReference type="AGR" id="MGI:2143099"/>
<dbReference type="MGI" id="MGI:2143099">
    <property type="gene designation" value="AI593442"/>
</dbReference>
<dbReference type="VEuPathDB" id="HostDB:ENSMUSG00000078307"/>
<dbReference type="eggNOG" id="ENOG502S981">
    <property type="taxonomic scope" value="Eukaryota"/>
</dbReference>
<dbReference type="GeneTree" id="ENSGT00390000012905"/>
<dbReference type="HOGENOM" id="CLU_074982_0_0_1"/>
<dbReference type="InParanoid" id="Q32M26"/>
<dbReference type="OMA" id="YERDHCT"/>
<dbReference type="OrthoDB" id="9943854at2759"/>
<dbReference type="PhylomeDB" id="Q32M26"/>
<dbReference type="TreeFam" id="TF336990"/>
<dbReference type="BioGRID-ORCS" id="330941">
    <property type="hits" value="4 hits in 76 CRISPR screens"/>
</dbReference>
<dbReference type="PRO" id="PR:Q32M26"/>
<dbReference type="Proteomes" id="UP000000589">
    <property type="component" value="Chromosome 9"/>
</dbReference>
<dbReference type="RNAct" id="Q32M26">
    <property type="molecule type" value="protein"/>
</dbReference>
<dbReference type="Bgee" id="ENSMUSG00000078307">
    <property type="expression patterns" value="Expressed in caudate-putamen and 107 other cell types or tissues"/>
</dbReference>
<dbReference type="ExpressionAtlas" id="Q32M26">
    <property type="expression patterns" value="baseline and differential"/>
</dbReference>
<dbReference type="GO" id="GO:0016020">
    <property type="term" value="C:membrane"/>
    <property type="evidence" value="ECO:0007669"/>
    <property type="project" value="UniProtKB-SubCell"/>
</dbReference>
<dbReference type="InterPro" id="IPR037670">
    <property type="entry name" value="C11orf87"/>
</dbReference>
<dbReference type="PANTHER" id="PTHR31870:SF2">
    <property type="entry name" value="CHROMOSOME 11 OPEN READING FRAME 87"/>
    <property type="match status" value="1"/>
</dbReference>
<dbReference type="PANTHER" id="PTHR31870">
    <property type="entry name" value="SI:DKEY-183I3.9-RELATED"/>
    <property type="match status" value="1"/>
</dbReference>
<feature type="signal peptide" evidence="1">
    <location>
        <begin position="1"/>
        <end position="23"/>
    </location>
</feature>
<feature type="chain" id="PRO_0000320197" description="Uncharacterized protein C11orf87 homolog">
    <location>
        <begin position="24"/>
        <end position="199"/>
    </location>
</feature>
<feature type="topological domain" description="Extracellular" evidence="1">
    <location>
        <begin position="24"/>
        <end position="60"/>
    </location>
</feature>
<feature type="transmembrane region" description="Helical" evidence="1">
    <location>
        <begin position="61"/>
        <end position="81"/>
    </location>
</feature>
<feature type="topological domain" description="Cytoplasmic" evidence="1">
    <location>
        <begin position="82"/>
        <end position="199"/>
    </location>
</feature>
<feature type="region of interest" description="Disordered" evidence="2">
    <location>
        <begin position="93"/>
        <end position="190"/>
    </location>
</feature>
<feature type="compositionally biased region" description="Basic and acidic residues" evidence="2">
    <location>
        <begin position="95"/>
        <end position="106"/>
    </location>
</feature>
<feature type="compositionally biased region" description="Basic and acidic residues" evidence="2">
    <location>
        <begin position="124"/>
        <end position="135"/>
    </location>
</feature>
<feature type="compositionally biased region" description="Low complexity" evidence="2">
    <location>
        <begin position="147"/>
        <end position="163"/>
    </location>
</feature>
<feature type="compositionally biased region" description="Pro residues" evidence="2">
    <location>
        <begin position="164"/>
        <end position="176"/>
    </location>
</feature>
<feature type="glycosylation site" description="N-linked (GlcNAc...) asparagine" evidence="1">
    <location>
        <position position="19"/>
    </location>
</feature>
<feature type="glycosylation site" description="N-linked (GlcNAc...) asparagine" evidence="1">
    <location>
        <position position="26"/>
    </location>
</feature>
<feature type="sequence conflict" description="In Ref. 1; BAC28535." evidence="3" ref="1">
    <original>CS</original>
    <variation>WT</variation>
    <location>
        <begin position="105"/>
        <end position="106"/>
    </location>
</feature>
<accession>Q32M26</accession>
<accession>Q8CC42</accession>
<name>CK087_MOUSE</name>